<feature type="chain" id="PRO_0000186071" description="Histone-lysine N-methyltransferase, H3 lysine-36 specific">
    <location>
        <begin position="1"/>
        <end position="2588"/>
    </location>
</feature>
<feature type="domain" description="PWWP" evidence="5">
    <location>
        <begin position="1654"/>
        <end position="1716"/>
    </location>
</feature>
<feature type="domain" description="AWS" evidence="7">
    <location>
        <begin position="1788"/>
        <end position="1838"/>
    </location>
</feature>
<feature type="domain" description="SET" evidence="6">
    <location>
        <begin position="1840"/>
        <end position="1957"/>
    </location>
</feature>
<feature type="domain" description="Post-SET" evidence="4">
    <location>
        <begin position="1964"/>
        <end position="1980"/>
    </location>
</feature>
<feature type="zinc finger region" description="PHD-type 1" evidence="3">
    <location>
        <begin position="1441"/>
        <end position="1487"/>
    </location>
</feature>
<feature type="zinc finger region" description="PHD-type 2" evidence="3">
    <location>
        <begin position="1488"/>
        <end position="1544"/>
    </location>
</feature>
<feature type="zinc finger region" description="PHD-type 3" evidence="3">
    <location>
        <begin position="1605"/>
        <end position="1649"/>
    </location>
</feature>
<feature type="zinc finger region" description="PHD-type 4; atypical" evidence="3">
    <location>
        <begin position="2016"/>
        <end position="2063"/>
    </location>
</feature>
<feature type="region of interest" description="Disordered" evidence="8">
    <location>
        <begin position="209"/>
        <end position="264"/>
    </location>
</feature>
<feature type="region of interest" description="Disordered" evidence="8">
    <location>
        <begin position="277"/>
        <end position="307"/>
    </location>
</feature>
<feature type="region of interest" description="Disordered" evidence="8">
    <location>
        <begin position="383"/>
        <end position="403"/>
    </location>
</feature>
<feature type="region of interest" description="Disordered" evidence="8">
    <location>
        <begin position="830"/>
        <end position="899"/>
    </location>
</feature>
<feature type="region of interest" description="Disordered" evidence="8">
    <location>
        <begin position="947"/>
        <end position="987"/>
    </location>
</feature>
<feature type="region of interest" description="Disordered" evidence="8">
    <location>
        <begin position="1008"/>
        <end position="1133"/>
    </location>
</feature>
<feature type="region of interest" description="Disordered" evidence="8">
    <location>
        <begin position="1279"/>
        <end position="1324"/>
    </location>
</feature>
<feature type="region of interest" description="Inhibits enzyme activity in the absence of bound histone" evidence="1">
    <location>
        <begin position="1958"/>
        <end position="1964"/>
    </location>
</feature>
<feature type="region of interest" description="Disordered" evidence="8">
    <location>
        <begin position="1989"/>
        <end position="2010"/>
    </location>
</feature>
<feature type="region of interest" description="Disordered" evidence="8">
    <location>
        <begin position="2105"/>
        <end position="2320"/>
    </location>
</feature>
<feature type="region of interest" description="Disordered" evidence="8">
    <location>
        <begin position="2333"/>
        <end position="2423"/>
    </location>
</feature>
<feature type="region of interest" description="Disordered" evidence="8">
    <location>
        <begin position="2447"/>
        <end position="2521"/>
    </location>
</feature>
<feature type="region of interest" description="Disordered" evidence="8">
    <location>
        <begin position="2560"/>
        <end position="2588"/>
    </location>
</feature>
<feature type="compositionally biased region" description="Basic and acidic residues" evidence="8">
    <location>
        <begin position="235"/>
        <end position="249"/>
    </location>
</feature>
<feature type="compositionally biased region" description="Polar residues" evidence="8">
    <location>
        <begin position="298"/>
        <end position="307"/>
    </location>
</feature>
<feature type="compositionally biased region" description="Polar residues" evidence="8">
    <location>
        <begin position="855"/>
        <end position="874"/>
    </location>
</feature>
<feature type="compositionally biased region" description="Low complexity" evidence="8">
    <location>
        <begin position="881"/>
        <end position="895"/>
    </location>
</feature>
<feature type="compositionally biased region" description="Basic and acidic residues" evidence="8">
    <location>
        <begin position="1008"/>
        <end position="1033"/>
    </location>
</feature>
<feature type="compositionally biased region" description="Basic residues" evidence="8">
    <location>
        <begin position="1054"/>
        <end position="1073"/>
    </location>
</feature>
<feature type="compositionally biased region" description="Basic residues" evidence="8">
    <location>
        <begin position="1995"/>
        <end position="2006"/>
    </location>
</feature>
<feature type="compositionally biased region" description="Basic and acidic residues" evidence="8">
    <location>
        <begin position="2179"/>
        <end position="2196"/>
    </location>
</feature>
<feature type="compositionally biased region" description="Polar residues" evidence="8">
    <location>
        <begin position="2201"/>
        <end position="2212"/>
    </location>
</feature>
<feature type="compositionally biased region" description="Basic and acidic residues" evidence="8">
    <location>
        <begin position="2213"/>
        <end position="2223"/>
    </location>
</feature>
<feature type="compositionally biased region" description="Low complexity" evidence="8">
    <location>
        <begin position="2232"/>
        <end position="2249"/>
    </location>
</feature>
<feature type="compositionally biased region" description="Basic and acidic residues" evidence="8">
    <location>
        <begin position="2250"/>
        <end position="2261"/>
    </location>
</feature>
<feature type="binding site" evidence="1">
    <location>
        <begin position="1850"/>
        <end position="1852"/>
    </location>
    <ligand>
        <name>S-adenosyl-L-methionine</name>
        <dbReference type="ChEBI" id="CHEBI:59789"/>
    </ligand>
</feature>
<feature type="binding site" evidence="1">
    <location>
        <begin position="1892"/>
        <end position="1895"/>
    </location>
    <ligand>
        <name>S-adenosyl-L-methionine</name>
        <dbReference type="ChEBI" id="CHEBI:59789"/>
    </ligand>
</feature>
<feature type="binding site" evidence="1">
    <location>
        <begin position="1918"/>
        <end position="1919"/>
    </location>
    <ligand>
        <name>S-adenosyl-L-methionine</name>
        <dbReference type="ChEBI" id="CHEBI:59789"/>
    </ligand>
</feature>
<feature type="binding site" evidence="6">
    <location>
        <position position="1963"/>
    </location>
    <ligand>
        <name>S-adenosyl-L-methionine</name>
        <dbReference type="ChEBI" id="CHEBI:59789"/>
    </ligand>
</feature>
<feature type="binding site" evidence="6">
    <location>
        <position position="1969"/>
    </location>
    <ligand>
        <name>S-adenosyl-L-methionine</name>
        <dbReference type="ChEBI" id="CHEBI:59789"/>
    </ligand>
</feature>
<feature type="modified residue" description="Phosphoserine" evidence="16">
    <location>
        <position position="110"/>
    </location>
</feature>
<feature type="modified residue" description="Phosphoserine" evidence="16">
    <location>
        <position position="118"/>
    </location>
</feature>
<feature type="modified residue" description="Phosphoserine" evidence="2">
    <location>
        <position position="380"/>
    </location>
</feature>
<feature type="modified residue" description="Phosphoserine" evidence="2">
    <location>
        <position position="383"/>
    </location>
</feature>
<feature type="modified residue" description="Phosphoserine" evidence="16">
    <location>
        <position position="1408"/>
    </location>
</feature>
<feature type="modified residue" description="Phosphoserine" evidence="2">
    <location>
        <position position="2267"/>
    </location>
</feature>
<feature type="modified residue" description="Phosphothreonine" evidence="2">
    <location>
        <position position="2360"/>
    </location>
</feature>
<feature type="modified residue" description="Phosphoserine" evidence="16">
    <location>
        <position position="2369"/>
    </location>
</feature>
<feature type="cross-link" description="Glycyl lysine isopeptide (Lys-Gly) (interchain with G-Cter in SUMO2)" evidence="2">
    <location>
        <position position="802"/>
    </location>
</feature>
<feature type="cross-link" description="Glycyl lysine isopeptide (Lys-Gly) (interchain with G-Cter in SUMO2)" evidence="2">
    <location>
        <position position="1237"/>
    </location>
</feature>
<feature type="cross-link" description="Glycyl lysine isopeptide (Lys-Gly) (interchain with G-Cter in SUMO2)" evidence="2">
    <location>
        <position position="2509"/>
    </location>
</feature>
<feature type="mutagenesis site" description="No effect on interaction with nuclear receptors." evidence="11">
    <original>F</original>
    <variation>A</variation>
    <variation>Y</variation>
    <location>
        <position position="803"/>
    </location>
</feature>
<feature type="mutagenesis site" description="Abolishes interaction with nuclear receptors." evidence="11">
    <original>ST</original>
    <variation>AA</variation>
    <location>
        <begin position="804"/>
        <end position="805"/>
    </location>
</feature>
<feature type="mutagenesis site" description="Strongly decreases interaction with liganded nuclear receptors. No effect on interaction with non-liganded nuclear receptors." evidence="11">
    <original>LL</original>
    <variation>AA</variation>
    <location>
        <begin position="806"/>
        <end position="807"/>
    </location>
</feature>
<feature type="mutagenesis site" description="Increases methyltransferase activity towards H3 and H4. Increases methyltransferase activity; when associated with E-1950." evidence="9">
    <original>C</original>
    <variation>S</variation>
    <location>
        <position position="1920"/>
    </location>
</feature>
<feature type="mutagenesis site" description="Does not affect histone methyltransferase activity. Increases methyltransferase activity; when associated with S-1920." evidence="9">
    <original>T</original>
    <variation>E</variation>
    <location>
        <position position="1950"/>
    </location>
</feature>
<feature type="helix" evidence="19">
    <location>
        <begin position="1750"/>
        <end position="1761"/>
    </location>
</feature>
<feature type="helix" evidence="18">
    <location>
        <begin position="1787"/>
        <end position="1789"/>
    </location>
</feature>
<feature type="strand" evidence="18">
    <location>
        <begin position="1799"/>
        <end position="1801"/>
    </location>
</feature>
<feature type="helix" evidence="18">
    <location>
        <begin position="1810"/>
        <end position="1813"/>
    </location>
</feature>
<feature type="turn" evidence="18">
    <location>
        <begin position="1820"/>
        <end position="1822"/>
    </location>
</feature>
<feature type="helix" evidence="18">
    <location>
        <begin position="1826"/>
        <end position="1828"/>
    </location>
</feature>
<feature type="helix" evidence="18">
    <location>
        <begin position="1833"/>
        <end position="1836"/>
    </location>
</feature>
<feature type="strand" evidence="18">
    <location>
        <begin position="1842"/>
        <end position="1846"/>
    </location>
</feature>
<feature type="strand" evidence="18">
    <location>
        <begin position="1848"/>
        <end position="1850"/>
    </location>
</feature>
<feature type="strand" evidence="18">
    <location>
        <begin position="1852"/>
        <end position="1858"/>
    </location>
</feature>
<feature type="strand" evidence="18">
    <location>
        <begin position="1865"/>
        <end position="1868"/>
    </location>
</feature>
<feature type="strand" evidence="18">
    <location>
        <begin position="1872"/>
        <end position="1874"/>
    </location>
</feature>
<feature type="helix" evidence="18">
    <location>
        <begin position="1876"/>
        <end position="1888"/>
    </location>
</feature>
<feature type="strand" evidence="18">
    <location>
        <begin position="1896"/>
        <end position="1902"/>
    </location>
</feature>
<feature type="strand" evidence="18">
    <location>
        <begin position="1904"/>
        <end position="1906"/>
    </location>
</feature>
<feature type="turn" evidence="18">
    <location>
        <begin position="1907"/>
        <end position="1909"/>
    </location>
</feature>
<feature type="helix" evidence="18">
    <location>
        <begin position="1913"/>
        <end position="1916"/>
    </location>
</feature>
<feature type="strand" evidence="18">
    <location>
        <begin position="1924"/>
        <end position="1931"/>
    </location>
</feature>
<feature type="strand" evidence="18">
    <location>
        <begin position="1933"/>
        <end position="1944"/>
    </location>
</feature>
<feature type="turn" evidence="18">
    <location>
        <begin position="1957"/>
        <end position="1959"/>
    </location>
</feature>
<feature type="strand" evidence="17">
    <location>
        <begin position="2017"/>
        <end position="2019"/>
    </location>
</feature>
<feature type="turn" evidence="17">
    <location>
        <begin position="2020"/>
        <end position="2022"/>
    </location>
</feature>
<feature type="strand" evidence="17">
    <location>
        <begin position="2026"/>
        <end position="2030"/>
    </location>
</feature>
<feature type="strand" evidence="17">
    <location>
        <begin position="2039"/>
        <end position="2041"/>
    </location>
</feature>
<feature type="turn" evidence="17">
    <location>
        <begin position="2042"/>
        <end position="2046"/>
    </location>
</feature>
<feature type="helix" evidence="17">
    <location>
        <begin position="2058"/>
        <end position="2060"/>
    </location>
</feature>
<feature type="turn" evidence="17">
    <location>
        <begin position="2063"/>
        <end position="2065"/>
    </location>
</feature>
<feature type="strand" evidence="17">
    <location>
        <begin position="2066"/>
        <end position="2068"/>
    </location>
</feature>
<feature type="turn" evidence="17">
    <location>
        <begin position="2082"/>
        <end position="2084"/>
    </location>
</feature>
<feature type="turn" evidence="17">
    <location>
        <begin position="2086"/>
        <end position="2088"/>
    </location>
</feature>
<feature type="strand" evidence="17">
    <location>
        <begin position="2089"/>
        <end position="2091"/>
    </location>
</feature>
<feature type="turn" evidence="17">
    <location>
        <begin position="2093"/>
        <end position="2095"/>
    </location>
</feature>
<feature type="strand" evidence="17">
    <location>
        <begin position="2098"/>
        <end position="2100"/>
    </location>
</feature>
<evidence type="ECO:0000250" key="1"/>
<evidence type="ECO:0000250" key="2">
    <source>
        <dbReference type="UniProtKB" id="Q96L73"/>
    </source>
</evidence>
<evidence type="ECO:0000255" key="3">
    <source>
        <dbReference type="PROSITE-ProRule" id="PRU00146"/>
    </source>
</evidence>
<evidence type="ECO:0000255" key="4">
    <source>
        <dbReference type="PROSITE-ProRule" id="PRU00155"/>
    </source>
</evidence>
<evidence type="ECO:0000255" key="5">
    <source>
        <dbReference type="PROSITE-ProRule" id="PRU00162"/>
    </source>
</evidence>
<evidence type="ECO:0000255" key="6">
    <source>
        <dbReference type="PROSITE-ProRule" id="PRU00190"/>
    </source>
</evidence>
<evidence type="ECO:0000255" key="7">
    <source>
        <dbReference type="PROSITE-ProRule" id="PRU00562"/>
    </source>
</evidence>
<evidence type="ECO:0000256" key="8">
    <source>
        <dbReference type="SAM" id="MobiDB-lite"/>
    </source>
</evidence>
<evidence type="ECO:0000269" key="9">
    <source>
    </source>
</evidence>
<evidence type="ECO:0000269" key="10">
    <source>
    </source>
</evidence>
<evidence type="ECO:0000269" key="11">
    <source>
    </source>
</evidence>
<evidence type="ECO:0000305" key="12"/>
<evidence type="ECO:0000305" key="13">
    <source>
    </source>
</evidence>
<evidence type="ECO:0000312" key="14">
    <source>
        <dbReference type="EMBL" id="AAC40182.1"/>
    </source>
</evidence>
<evidence type="ECO:0000312" key="15">
    <source>
        <dbReference type="MGI" id="MGI:1276545"/>
    </source>
</evidence>
<evidence type="ECO:0007744" key="16">
    <source>
    </source>
</evidence>
<evidence type="ECO:0007829" key="17">
    <source>
        <dbReference type="PDB" id="2NAA"/>
    </source>
</evidence>
<evidence type="ECO:0007829" key="18">
    <source>
        <dbReference type="PDB" id="8FBG"/>
    </source>
</evidence>
<evidence type="ECO:0007829" key="19">
    <source>
        <dbReference type="PDB" id="8FBH"/>
    </source>
</evidence>
<reference evidence="12 14" key="1">
    <citation type="journal article" date="1998" name="EMBO J.">
        <title>Two distinct nuclear receptor interaction domains in NSD1, a novel SET protein that exhibits characteristics of both corepressors and coactivators.</title>
        <authorList>
            <person name="Huang N."/>
            <person name="vom Baur E."/>
            <person name="Garnier J.-M."/>
            <person name="Lerouge T."/>
            <person name="Vonesch J.-L."/>
            <person name="Lutz Y."/>
            <person name="Chambon P."/>
            <person name="Losson R."/>
        </authorList>
    </citation>
    <scope>NUCLEOTIDE SEQUENCE [MRNA]</scope>
    <scope>FUNCTION</scope>
    <scope>INTERACTION WITH RARA; THRA; RXRA AND ESRRA</scope>
    <scope>SUBCELLULAR LOCATION</scope>
    <scope>MUTAGENESIS OF PHE-803; 804-SER-THR-805 AND 806-LEU-LEU-807</scope>
    <source>
        <tissue evidence="11">Embryo</tissue>
    </source>
</reference>
<reference key="2">
    <citation type="journal article" date="2005" name="Science">
        <title>The transcriptional landscape of the mammalian genome.</title>
        <authorList>
            <person name="Carninci P."/>
            <person name="Kasukawa T."/>
            <person name="Katayama S."/>
            <person name="Gough J."/>
            <person name="Frith M.C."/>
            <person name="Maeda N."/>
            <person name="Oyama R."/>
            <person name="Ravasi T."/>
            <person name="Lenhard B."/>
            <person name="Wells C."/>
            <person name="Kodzius R."/>
            <person name="Shimokawa K."/>
            <person name="Bajic V.B."/>
            <person name="Brenner S.E."/>
            <person name="Batalov S."/>
            <person name="Forrest A.R."/>
            <person name="Zavolan M."/>
            <person name="Davis M.J."/>
            <person name="Wilming L.G."/>
            <person name="Aidinis V."/>
            <person name="Allen J.E."/>
            <person name="Ambesi-Impiombato A."/>
            <person name="Apweiler R."/>
            <person name="Aturaliya R.N."/>
            <person name="Bailey T.L."/>
            <person name="Bansal M."/>
            <person name="Baxter L."/>
            <person name="Beisel K.W."/>
            <person name="Bersano T."/>
            <person name="Bono H."/>
            <person name="Chalk A.M."/>
            <person name="Chiu K.P."/>
            <person name="Choudhary V."/>
            <person name="Christoffels A."/>
            <person name="Clutterbuck D.R."/>
            <person name="Crowe M.L."/>
            <person name="Dalla E."/>
            <person name="Dalrymple B.P."/>
            <person name="de Bono B."/>
            <person name="Della Gatta G."/>
            <person name="di Bernardo D."/>
            <person name="Down T."/>
            <person name="Engstrom P."/>
            <person name="Fagiolini M."/>
            <person name="Faulkner G."/>
            <person name="Fletcher C.F."/>
            <person name="Fukushima T."/>
            <person name="Furuno M."/>
            <person name="Futaki S."/>
            <person name="Gariboldi M."/>
            <person name="Georgii-Hemming P."/>
            <person name="Gingeras T.R."/>
            <person name="Gojobori T."/>
            <person name="Green R.E."/>
            <person name="Gustincich S."/>
            <person name="Harbers M."/>
            <person name="Hayashi Y."/>
            <person name="Hensch T.K."/>
            <person name="Hirokawa N."/>
            <person name="Hill D."/>
            <person name="Huminiecki L."/>
            <person name="Iacono M."/>
            <person name="Ikeo K."/>
            <person name="Iwama A."/>
            <person name="Ishikawa T."/>
            <person name="Jakt M."/>
            <person name="Kanapin A."/>
            <person name="Katoh M."/>
            <person name="Kawasawa Y."/>
            <person name="Kelso J."/>
            <person name="Kitamura H."/>
            <person name="Kitano H."/>
            <person name="Kollias G."/>
            <person name="Krishnan S.P."/>
            <person name="Kruger A."/>
            <person name="Kummerfeld S.K."/>
            <person name="Kurochkin I.V."/>
            <person name="Lareau L.F."/>
            <person name="Lazarevic D."/>
            <person name="Lipovich L."/>
            <person name="Liu J."/>
            <person name="Liuni S."/>
            <person name="McWilliam S."/>
            <person name="Madan Babu M."/>
            <person name="Madera M."/>
            <person name="Marchionni L."/>
            <person name="Matsuda H."/>
            <person name="Matsuzawa S."/>
            <person name="Miki H."/>
            <person name="Mignone F."/>
            <person name="Miyake S."/>
            <person name="Morris K."/>
            <person name="Mottagui-Tabar S."/>
            <person name="Mulder N."/>
            <person name="Nakano N."/>
            <person name="Nakauchi H."/>
            <person name="Ng P."/>
            <person name="Nilsson R."/>
            <person name="Nishiguchi S."/>
            <person name="Nishikawa S."/>
            <person name="Nori F."/>
            <person name="Ohara O."/>
            <person name="Okazaki Y."/>
            <person name="Orlando V."/>
            <person name="Pang K.C."/>
            <person name="Pavan W.J."/>
            <person name="Pavesi G."/>
            <person name="Pesole G."/>
            <person name="Petrovsky N."/>
            <person name="Piazza S."/>
            <person name="Reed J."/>
            <person name="Reid J.F."/>
            <person name="Ring B.Z."/>
            <person name="Ringwald M."/>
            <person name="Rost B."/>
            <person name="Ruan Y."/>
            <person name="Salzberg S.L."/>
            <person name="Sandelin A."/>
            <person name="Schneider C."/>
            <person name="Schoenbach C."/>
            <person name="Sekiguchi K."/>
            <person name="Semple C.A."/>
            <person name="Seno S."/>
            <person name="Sessa L."/>
            <person name="Sheng Y."/>
            <person name="Shibata Y."/>
            <person name="Shimada H."/>
            <person name="Shimada K."/>
            <person name="Silva D."/>
            <person name="Sinclair B."/>
            <person name="Sperling S."/>
            <person name="Stupka E."/>
            <person name="Sugiura K."/>
            <person name="Sultana R."/>
            <person name="Takenaka Y."/>
            <person name="Taki K."/>
            <person name="Tammoja K."/>
            <person name="Tan S.L."/>
            <person name="Tang S."/>
            <person name="Taylor M.S."/>
            <person name="Tegner J."/>
            <person name="Teichmann S.A."/>
            <person name="Ueda H.R."/>
            <person name="van Nimwegen E."/>
            <person name="Verardo R."/>
            <person name="Wei C.L."/>
            <person name="Yagi K."/>
            <person name="Yamanishi H."/>
            <person name="Zabarovsky E."/>
            <person name="Zhu S."/>
            <person name="Zimmer A."/>
            <person name="Hide W."/>
            <person name="Bult C."/>
            <person name="Grimmond S.M."/>
            <person name="Teasdale R.D."/>
            <person name="Liu E.T."/>
            <person name="Brusic V."/>
            <person name="Quackenbush J."/>
            <person name="Wahlestedt C."/>
            <person name="Mattick J.S."/>
            <person name="Hume D.A."/>
            <person name="Kai C."/>
            <person name="Sasaki D."/>
            <person name="Tomaru Y."/>
            <person name="Fukuda S."/>
            <person name="Kanamori-Katayama M."/>
            <person name="Suzuki M."/>
            <person name="Aoki J."/>
            <person name="Arakawa T."/>
            <person name="Iida J."/>
            <person name="Imamura K."/>
            <person name="Itoh M."/>
            <person name="Kato T."/>
            <person name="Kawaji H."/>
            <person name="Kawagashira N."/>
            <person name="Kawashima T."/>
            <person name="Kojima M."/>
            <person name="Kondo S."/>
            <person name="Konno H."/>
            <person name="Nakano K."/>
            <person name="Ninomiya N."/>
            <person name="Nishio T."/>
            <person name="Okada M."/>
            <person name="Plessy C."/>
            <person name="Shibata K."/>
            <person name="Shiraki T."/>
            <person name="Suzuki S."/>
            <person name="Tagami M."/>
            <person name="Waki K."/>
            <person name="Watahiki A."/>
            <person name="Okamura-Oho Y."/>
            <person name="Suzuki H."/>
            <person name="Kawai J."/>
            <person name="Hayashizaki Y."/>
        </authorList>
    </citation>
    <scope>NUCLEOTIDE SEQUENCE [LARGE SCALE MRNA] OF 2220-2588</scope>
    <source>
        <strain>C57BL/6J</strain>
        <tissue>Embryo</tissue>
    </source>
</reference>
<reference evidence="12" key="3">
    <citation type="journal article" date="2003" name="EMBO J.">
        <title>NSD1 is essential for early post-implantation development and has a catalytically active SET domain.</title>
        <authorList>
            <person name="Rayasam G.V."/>
            <person name="Wendling O."/>
            <person name="Angrand P.-O."/>
            <person name="Mark M."/>
            <person name="Niederreither K."/>
            <person name="Song L."/>
            <person name="Lerouge T."/>
            <person name="Hager G.L."/>
            <person name="Chambon P."/>
            <person name="Losson R."/>
        </authorList>
    </citation>
    <scope>FUNCTION</scope>
    <scope>CATALYTIC ACTIVITY</scope>
    <scope>TISSUE SPECIFICITY</scope>
    <scope>MUTAGENESIS OF CYS-1920 AND THR-1950</scope>
</reference>
<reference key="4">
    <citation type="journal article" date="2004" name="Mol. Cell. Biol.">
        <title>Nizp1, a novel multitype zinc finger protein that interacts with the NSD1 histone lysine methyltransferase through a unique C2HR motif.</title>
        <authorList>
            <person name="Nielsen A.L."/>
            <person name="Jorgensen P."/>
            <person name="Lerouge T."/>
            <person name="Cervino M."/>
            <person name="Chambon P."/>
            <person name="Losson R."/>
        </authorList>
    </citation>
    <scope>INTERACTION WITH ZNF496</scope>
</reference>
<reference key="5">
    <citation type="journal article" date="2010" name="Cell">
        <title>A tissue-specific atlas of mouse protein phosphorylation and expression.</title>
        <authorList>
            <person name="Huttlin E.L."/>
            <person name="Jedrychowski M.P."/>
            <person name="Elias J.E."/>
            <person name="Goswami T."/>
            <person name="Rad R."/>
            <person name="Beausoleil S.A."/>
            <person name="Villen J."/>
            <person name="Haas W."/>
            <person name="Sowa M.E."/>
            <person name="Gygi S.P."/>
        </authorList>
    </citation>
    <scope>PHOSPHORYLATION [LARGE SCALE ANALYSIS] AT SER-110; SER-118; SER-1408 AND SER-2369</scope>
    <scope>IDENTIFICATION BY MASS SPECTROMETRY [LARGE SCALE ANALYSIS]</scope>
    <source>
        <tissue>Brown adipose tissue</tissue>
        <tissue>Kidney</tissue>
        <tissue>Lung</tissue>
        <tissue>Spleen</tissue>
        <tissue>Testis</tissue>
    </source>
</reference>
<organism>
    <name type="scientific">Mus musculus</name>
    <name type="common">Mouse</name>
    <dbReference type="NCBI Taxonomy" id="10090"/>
    <lineage>
        <taxon>Eukaryota</taxon>
        <taxon>Metazoa</taxon>
        <taxon>Chordata</taxon>
        <taxon>Craniata</taxon>
        <taxon>Vertebrata</taxon>
        <taxon>Euteleostomi</taxon>
        <taxon>Mammalia</taxon>
        <taxon>Eutheria</taxon>
        <taxon>Euarchontoglires</taxon>
        <taxon>Glires</taxon>
        <taxon>Rodentia</taxon>
        <taxon>Myomorpha</taxon>
        <taxon>Muroidea</taxon>
        <taxon>Muridae</taxon>
        <taxon>Murinae</taxon>
        <taxon>Mus</taxon>
        <taxon>Mus</taxon>
    </lineage>
</organism>
<name>NSD1_MOUSE</name>
<protein>
    <recommendedName>
        <fullName>Histone-lysine N-methyltransferase, H3 lysine-36 specific</fullName>
        <ecNumber evidence="9">2.1.1.357</ecNumber>
    </recommendedName>
    <alternativeName>
        <fullName>H3-K36-HMTase</fullName>
    </alternativeName>
    <alternativeName>
        <fullName>Nuclear receptor-binding SET domain-containing protein 1</fullName>
        <shortName>NR-binding SET domain-containing protein</shortName>
    </alternativeName>
</protein>
<accession>O88491</accession>
<accession>Q8C480</accession>
<accession>Q9CT70</accession>
<gene>
    <name evidence="15" type="primary">Nsd1</name>
</gene>
<sequence length="2588" mass="284084">MDRTCELSRRNCLLSFSNPVNLDASEDKDSPFGNGQSNFSEPLNGCTMQLPTAASGTSQNAYGQDSPSCYIPLRRLQDLASMINVEYLSGSADGSESFQDPAKSDSRAQSPIVCTSLSPGGPTALAMKQEPTCNNSPELQLRVTKTTKNGFLHFENFTGVDDADVDSEMDPEQPVTEDESIEEIFEETQTNATCNYEPKSENGVEVAMGSEQDSMPESRHGAVERPFLPLAPQTEKQKNKQRSEVDGSNEKTALLPAPTSLGDTNVTVEEQFNSINLSFQDDPDSSPSPLGNMLEIPGTSSPSTSQELPFVPQKILSKWEASVGLAEQYDVPKGSKNQKCVSSSVKLDSEEDMPFEDCTNDPDSEHLLLNGCLKSLAFDSEHSADEKEKPCAKSRVRKSSDNIKRTSVKKDLVPFESRKEERRGKIPDNLGLDFISGGVSDKQASNELSRIANSLTGSSTAPGSFLFSSSVQNTAKTDFETPDCDSLSGLSESALISKHSGEKKKLHPGQVCSSKVQLCYVGAGDEEKRSNSVSVSTTSDDGCSDLDPTEHNSGFQNSVLGITDAFDKTENALSVHKNETQYSRYPVTNRIKEKQKSLITNSHADHLMGSTKTMEPETAELSQVNLSDLKISSPIPKPQPEFRNDGLTTKFSAPPGIRNENPLTKGGLANQTLLPLKCRQPKFRSIKCKHKESPAVAETSATSEDLSLKCCSSDTNGSPLANISKSGKGEGLKLLNNMHEKTRDSSDIETAVVKHVLSELKELSYRSLSEDVSDSGTAKASKPLLFSSASSQNHIPIEPDYKFSTLLMMLKDMHDSKTKEQRLMTAQNLASYRTPDRGDCSSGSPVGTSKVLVLGSSTPNSEKPGDSTQDSVHQSPGGGDSALSGELSSSLSSLASDKRELPACGKIRSNCIPRRNCGRAKPSSKLRETISAQMVKPSVNPKALKTERKRKFSRLPAVTLAANRLGNKESGSVNGPSRGGAEDPGKEEPLQQMDLLRNEDTHFSDVHFDSKAKQSDPDKNLEKEPSFENRKGPELGSEMNTENDELHGVNQVVPKKRWQRLNQRRPKPGKRANRFREKENSEGAFGVLLPADAVQKAREDYLEQRAPPTSKPEDSAADPNHGSHSESVAPRLNVCEKSSVGMGDVEKETGIPSLMPQTKLPEPAIRSEKKRLRKPSKWLLEYTEEYDQIFAPKKKQKKVQEQVHKVSSRCEDESLLARCQPSAQNKQVDENSLISTKEEPPVLEREAPFLEGPLAQSDLGVTHAELPQLTLSVPVAPEASPRPALESEELLVKTPGNYESKRQRKPTKKLLESNDLDPGFMPKKGDLGLSRKCFEASRSGNGIVESRATSHLKEFSGGTTKIFDKPRKRKRQRLVTARVHYKKVKKEDLTKDTPSSEGELLIHRTAASPKEILEEGVEHDPGMSASKKLQVERGGGAALKENVCQNCEKLGELLLCEAQCCGAFHLECLGLPEMPRGKFICNECHTGIHTCFVCKQSGEDVKRCLLPLCGKFYHEECVQKYPPTVTQNKGFRCPLHICITCHAANPANVSASKGRLMRCVRCPVAYHANDFCLAAGSKILASNSIICPNHFTPRRGCRNHEHVNVSWCFVCSEGGSLLCCDSCPAAFHRECLNIDIPEGNWYCNDCKAGKKPHYREIVWVKVGRYRWWPAEICHPRAVPSNIDKMRHDVGEFPVLFFGSNDYLWTHQARVFPYMEGDVSSKDKMGKGVDGTYKKALQEAAARFEELKARKELRQLQEDRKNDKKPPPYKHIKVNRPIGRVQIFTADLSEIPRCNCKATDENPCGIDSECINRMLLYECHPTVCPAGVRCQNQCFSKRQYPDVEIFRTLQRGWGLRTKTDIKKGEFVNEYVGELIDEEECRARIRYAQEHDITNFYMLTLDKDRIIDAGPKGNYARFMNHCCQPNCETQKWSVNGDTRVGLFALSDIKAGTELTFNYNLECLGNGKTVCKCGAPNCSGFLGVRPKNQPIVTEEKSRKFKRKPHGKRRSQGEVTKEREDECFSCGDAGQLVSCKKPGCPKVYHADCLNLTKRPAGKWECPWHQCDVCGKEAASFCEMCPSSFCKQHREGMLFISKLDGRLSCTEHDPCGPNPLEPGEIREYVPPTATSPPSPGTQPKEQSSEMATQGPKKSDQPPTDATQLLPLSKKALTGSCQRPLLPERPPERTDSSSHLLDRIRDLAGSGTKSQSLVSSQRPQDRPPAKEGPRPQPPDRASPMTRPSSSPSVSSLPLERPLRMTDSRLDKSIGAASPKSQAVEKTPASTGLRLSSPDRLLTTNSPKPQISDRPPEKSHASLTQRLPPPEKVLSAVVQSLVAKEKALRPVDQNTQSKHRPAVVMDLIDLTPRQKERAASPQEVTPQADEKTAMLESSSWPSSKGLGHIPRATEKISVSESLQPSGKVAAPSEHPWQAVKSLTHARFLSPPSAKAFLYESATQASGRTPVGAEQTPGPPSPAPGLVKQVKQLSRGLTAKSGQSFRSLGKISASLPNEEKKLTTTEQSPWGLGKASPGAGLWPIVAGQTLAQACWSAGGTQTLAQTCWSLGRGQDPKPENAIQALNQAPSSRKCADSEKK</sequence>
<keyword id="KW-0002">3D-structure</keyword>
<keyword id="KW-0010">Activator</keyword>
<keyword id="KW-0156">Chromatin regulator</keyword>
<keyword id="KW-0158">Chromosome</keyword>
<keyword id="KW-0217">Developmental protein</keyword>
<keyword id="KW-1017">Isopeptide bond</keyword>
<keyword id="KW-0479">Metal-binding</keyword>
<keyword id="KW-0489">Methyltransferase</keyword>
<keyword id="KW-0539">Nucleus</keyword>
<keyword id="KW-0597">Phosphoprotein</keyword>
<keyword id="KW-0675">Receptor</keyword>
<keyword id="KW-1185">Reference proteome</keyword>
<keyword id="KW-0677">Repeat</keyword>
<keyword id="KW-0678">Repressor</keyword>
<keyword id="KW-0949">S-adenosyl-L-methionine</keyword>
<keyword id="KW-0804">Transcription</keyword>
<keyword id="KW-0805">Transcription regulation</keyword>
<keyword id="KW-0808">Transferase</keyword>
<keyword id="KW-0832">Ubl conjugation</keyword>
<keyword id="KW-0862">Zinc</keyword>
<keyword id="KW-0863">Zinc-finger</keyword>
<dbReference type="EC" id="2.1.1.357" evidence="9"/>
<dbReference type="EMBL" id="AF064553">
    <property type="protein sequence ID" value="AAC40182.1"/>
    <property type="molecule type" value="mRNA"/>
</dbReference>
<dbReference type="EMBL" id="AK082820">
    <property type="protein sequence ID" value="BAC38635.1"/>
    <property type="molecule type" value="mRNA"/>
</dbReference>
<dbReference type="EMBL" id="AK004485">
    <property type="protein sequence ID" value="BAB23326.1"/>
    <property type="molecule type" value="mRNA"/>
</dbReference>
<dbReference type="PIR" id="T14342">
    <property type="entry name" value="T14342"/>
</dbReference>
<dbReference type="PDB" id="2NAA">
    <property type="method" value="NMR"/>
    <property type="chains" value="A=2014-2104"/>
</dbReference>
<dbReference type="PDB" id="8FBG">
    <property type="method" value="X-ray"/>
    <property type="resolution" value="2.29 A"/>
    <property type="chains" value="A/B=1750-1980"/>
</dbReference>
<dbReference type="PDB" id="8FBH">
    <property type="method" value="X-ray"/>
    <property type="resolution" value="2.32 A"/>
    <property type="chains" value="A=1750-1980"/>
</dbReference>
<dbReference type="PDBsum" id="2NAA"/>
<dbReference type="PDBsum" id="8FBG"/>
<dbReference type="PDBsum" id="8FBH"/>
<dbReference type="SMR" id="O88491"/>
<dbReference type="FunCoup" id="O88491">
    <property type="interactions" value="2102"/>
</dbReference>
<dbReference type="IntAct" id="O88491">
    <property type="interactions" value="1"/>
</dbReference>
<dbReference type="STRING" id="10090.ENSMUSP00000097089"/>
<dbReference type="GlyGen" id="O88491">
    <property type="glycosylation" value="2 sites, 1 O-linked glycan (2 sites)"/>
</dbReference>
<dbReference type="iPTMnet" id="O88491"/>
<dbReference type="PhosphoSitePlus" id="O88491"/>
<dbReference type="jPOST" id="O88491"/>
<dbReference type="PaxDb" id="10090-ENSMUSP00000097089"/>
<dbReference type="PeptideAtlas" id="O88491"/>
<dbReference type="ProteomicsDB" id="253018"/>
<dbReference type="AGR" id="MGI:1276545"/>
<dbReference type="MGI" id="MGI:1276545">
    <property type="gene designation" value="Nsd1"/>
</dbReference>
<dbReference type="eggNOG" id="KOG1081">
    <property type="taxonomic scope" value="Eukaryota"/>
</dbReference>
<dbReference type="InParanoid" id="O88491"/>
<dbReference type="PhylomeDB" id="O88491"/>
<dbReference type="Reactome" id="R-MMU-3214841">
    <property type="pathway name" value="PKMTs methylate histone lysines"/>
</dbReference>
<dbReference type="ChiTaRS" id="Nsd1">
    <property type="organism name" value="mouse"/>
</dbReference>
<dbReference type="EvolutionaryTrace" id="O88491"/>
<dbReference type="PRO" id="PR:O88491"/>
<dbReference type="Proteomes" id="UP000000589">
    <property type="component" value="Unplaced"/>
</dbReference>
<dbReference type="RNAct" id="O88491">
    <property type="molecule type" value="protein"/>
</dbReference>
<dbReference type="GO" id="GO:0005694">
    <property type="term" value="C:chromosome"/>
    <property type="evidence" value="ECO:0007669"/>
    <property type="project" value="UniProtKB-SubCell"/>
</dbReference>
<dbReference type="GO" id="GO:0035097">
    <property type="term" value="C:histone methyltransferase complex"/>
    <property type="evidence" value="ECO:0000305"/>
    <property type="project" value="UniProtKB"/>
</dbReference>
<dbReference type="GO" id="GO:0005634">
    <property type="term" value="C:nucleus"/>
    <property type="evidence" value="ECO:0000314"/>
    <property type="project" value="MGI"/>
</dbReference>
<dbReference type="GO" id="GO:0003682">
    <property type="term" value="F:chromatin binding"/>
    <property type="evidence" value="ECO:0000314"/>
    <property type="project" value="MGI"/>
</dbReference>
<dbReference type="GO" id="GO:0140954">
    <property type="term" value="F:histone H3K36 dimethyltransferase activity"/>
    <property type="evidence" value="ECO:0007669"/>
    <property type="project" value="UniProtKB-EC"/>
</dbReference>
<dbReference type="GO" id="GO:0046975">
    <property type="term" value="F:histone H3K36 methyltransferase activity"/>
    <property type="evidence" value="ECO:0000314"/>
    <property type="project" value="UniProtKB"/>
</dbReference>
<dbReference type="GO" id="GO:0042799">
    <property type="term" value="F:histone H4K20 methyltransferase activity"/>
    <property type="evidence" value="ECO:0000314"/>
    <property type="project" value="UniProtKB"/>
</dbReference>
<dbReference type="GO" id="GO:0042054">
    <property type="term" value="F:histone methyltransferase activity"/>
    <property type="evidence" value="ECO:0000314"/>
    <property type="project" value="MGI"/>
</dbReference>
<dbReference type="GO" id="GO:0050681">
    <property type="term" value="F:nuclear androgen receptor binding"/>
    <property type="evidence" value="ECO:0000250"/>
    <property type="project" value="UniProtKB"/>
</dbReference>
<dbReference type="GO" id="GO:0030331">
    <property type="term" value="F:nuclear estrogen receptor binding"/>
    <property type="evidence" value="ECO:0000353"/>
    <property type="project" value="UniProtKB"/>
</dbReference>
<dbReference type="GO" id="GO:0042974">
    <property type="term" value="F:nuclear retinoic acid receptor binding"/>
    <property type="evidence" value="ECO:0000353"/>
    <property type="project" value="UniProtKB"/>
</dbReference>
<dbReference type="GO" id="GO:0046965">
    <property type="term" value="F:nuclear retinoid X receptor binding"/>
    <property type="evidence" value="ECO:0000353"/>
    <property type="project" value="UniProtKB"/>
</dbReference>
<dbReference type="GO" id="GO:0046966">
    <property type="term" value="F:nuclear thyroid hormone receptor binding"/>
    <property type="evidence" value="ECO:0000353"/>
    <property type="project" value="UniProtKB"/>
</dbReference>
<dbReference type="GO" id="GO:0000978">
    <property type="term" value="F:RNA polymerase II cis-regulatory region sequence-specific DNA binding"/>
    <property type="evidence" value="ECO:0000266"/>
    <property type="project" value="MGI"/>
</dbReference>
<dbReference type="GO" id="GO:0003712">
    <property type="term" value="F:transcription coregulator activity"/>
    <property type="evidence" value="ECO:0000314"/>
    <property type="project" value="MGI"/>
</dbReference>
<dbReference type="GO" id="GO:0003714">
    <property type="term" value="F:transcription corepressor activity"/>
    <property type="evidence" value="ECO:0000314"/>
    <property type="project" value="UniProtKB"/>
</dbReference>
<dbReference type="GO" id="GO:0008270">
    <property type="term" value="F:zinc ion binding"/>
    <property type="evidence" value="ECO:0000250"/>
    <property type="project" value="UniProtKB"/>
</dbReference>
<dbReference type="GO" id="GO:0001702">
    <property type="term" value="P:gastrulation with mouth forming second"/>
    <property type="evidence" value="ECO:0000315"/>
    <property type="project" value="MGI"/>
</dbReference>
<dbReference type="GO" id="GO:0032259">
    <property type="term" value="P:methylation"/>
    <property type="evidence" value="ECO:0007669"/>
    <property type="project" value="UniProtKB-KW"/>
</dbReference>
<dbReference type="GO" id="GO:0000122">
    <property type="term" value="P:negative regulation of transcription by RNA polymerase II"/>
    <property type="evidence" value="ECO:0000314"/>
    <property type="project" value="UniProtKB"/>
</dbReference>
<dbReference type="GO" id="GO:0045893">
    <property type="term" value="P:positive regulation of DNA-templated transcription"/>
    <property type="evidence" value="ECO:0000250"/>
    <property type="project" value="UniProtKB"/>
</dbReference>
<dbReference type="GO" id="GO:0006355">
    <property type="term" value="P:regulation of DNA-templated transcription"/>
    <property type="evidence" value="ECO:0000304"/>
    <property type="project" value="MGI"/>
</dbReference>
<dbReference type="CDD" id="cd15648">
    <property type="entry name" value="PHD1_NSD1_2"/>
    <property type="match status" value="1"/>
</dbReference>
<dbReference type="CDD" id="cd15650">
    <property type="entry name" value="PHD2_NSD1"/>
    <property type="match status" value="1"/>
</dbReference>
<dbReference type="CDD" id="cd15653">
    <property type="entry name" value="PHD3_NSD1"/>
    <property type="match status" value="1"/>
</dbReference>
<dbReference type="CDD" id="cd15656">
    <property type="entry name" value="PHD4_NSD1"/>
    <property type="match status" value="1"/>
</dbReference>
<dbReference type="CDD" id="cd15659">
    <property type="entry name" value="PHD5_NSD1"/>
    <property type="match status" value="1"/>
</dbReference>
<dbReference type="CDD" id="cd20164">
    <property type="entry name" value="PWWP_NSD1_rpt2"/>
    <property type="match status" value="1"/>
</dbReference>
<dbReference type="CDD" id="cd19210">
    <property type="entry name" value="SET_NSD1"/>
    <property type="match status" value="1"/>
</dbReference>
<dbReference type="FunFam" id="2.170.270.10:FF:000002">
    <property type="entry name" value="Histone-lysine N-methyltransferase"/>
    <property type="match status" value="1"/>
</dbReference>
<dbReference type="FunFam" id="2.30.30.140:FF:000004">
    <property type="entry name" value="Histone-lysine N-methyltransferase"/>
    <property type="match status" value="1"/>
</dbReference>
<dbReference type="FunFam" id="3.30.40.10:FF:000025">
    <property type="entry name" value="Histone-lysine N-methyltransferase"/>
    <property type="match status" value="1"/>
</dbReference>
<dbReference type="FunFam" id="3.30.40.10:FF:000093">
    <property type="entry name" value="Histone-lysine N-methyltransferase"/>
    <property type="match status" value="1"/>
</dbReference>
<dbReference type="FunFam" id="3.30.40.10:FF:000106">
    <property type="entry name" value="Histone-lysine N-methyltransferase"/>
    <property type="match status" value="1"/>
</dbReference>
<dbReference type="FunFam" id="3.30.40.10:FF:000201">
    <property type="entry name" value="Histone-lysine N-methyltransferase"/>
    <property type="match status" value="1"/>
</dbReference>
<dbReference type="Gene3D" id="2.30.30.140">
    <property type="match status" value="1"/>
</dbReference>
<dbReference type="Gene3D" id="2.170.270.10">
    <property type="entry name" value="SET domain"/>
    <property type="match status" value="1"/>
</dbReference>
<dbReference type="Gene3D" id="3.30.40.10">
    <property type="entry name" value="Zinc/RING finger domain, C3HC4 (zinc finger)"/>
    <property type="match status" value="4"/>
</dbReference>
<dbReference type="InterPro" id="IPR006560">
    <property type="entry name" value="AWS_dom"/>
</dbReference>
<dbReference type="InterPro" id="IPR041306">
    <property type="entry name" value="C5HCH"/>
</dbReference>
<dbReference type="InterPro" id="IPR055198">
    <property type="entry name" value="NSD_PHD"/>
</dbReference>
<dbReference type="InterPro" id="IPR047426">
    <property type="entry name" value="PHD1_NSD1_2"/>
</dbReference>
<dbReference type="InterPro" id="IPR047428">
    <property type="entry name" value="PHD2_NSD1"/>
</dbReference>
<dbReference type="InterPro" id="IPR047429">
    <property type="entry name" value="PHD3_NSD1"/>
</dbReference>
<dbReference type="InterPro" id="IPR047430">
    <property type="entry name" value="PHD4_NSD1"/>
</dbReference>
<dbReference type="InterPro" id="IPR047432">
    <property type="entry name" value="PHD5_NSD1"/>
</dbReference>
<dbReference type="InterPro" id="IPR055197">
    <property type="entry name" value="PHDvar_NSD"/>
</dbReference>
<dbReference type="InterPro" id="IPR003616">
    <property type="entry name" value="Post-SET_dom"/>
</dbReference>
<dbReference type="InterPro" id="IPR000313">
    <property type="entry name" value="PWWP_dom"/>
</dbReference>
<dbReference type="InterPro" id="IPR047423">
    <property type="entry name" value="PWWP_NSD1_rpt2"/>
</dbReference>
<dbReference type="InterPro" id="IPR050777">
    <property type="entry name" value="SET2_Histone-Lys_MeTrsfase"/>
</dbReference>
<dbReference type="InterPro" id="IPR001214">
    <property type="entry name" value="SET_dom"/>
</dbReference>
<dbReference type="InterPro" id="IPR046341">
    <property type="entry name" value="SET_dom_sf"/>
</dbReference>
<dbReference type="InterPro" id="IPR047433">
    <property type="entry name" value="SET_NSD1"/>
</dbReference>
<dbReference type="InterPro" id="IPR019786">
    <property type="entry name" value="Zinc_finger_PHD-type_CS"/>
</dbReference>
<dbReference type="InterPro" id="IPR011011">
    <property type="entry name" value="Znf_FYVE_PHD"/>
</dbReference>
<dbReference type="InterPro" id="IPR001965">
    <property type="entry name" value="Znf_PHD"/>
</dbReference>
<dbReference type="InterPro" id="IPR019787">
    <property type="entry name" value="Znf_PHD-finger"/>
</dbReference>
<dbReference type="InterPro" id="IPR001841">
    <property type="entry name" value="Znf_RING"/>
</dbReference>
<dbReference type="InterPro" id="IPR013083">
    <property type="entry name" value="Znf_RING/FYVE/PHD"/>
</dbReference>
<dbReference type="PANTHER" id="PTHR22884">
    <property type="entry name" value="SET DOMAIN PROTEINS"/>
    <property type="match status" value="1"/>
</dbReference>
<dbReference type="Pfam" id="PF17907">
    <property type="entry name" value="AWS"/>
    <property type="match status" value="1"/>
</dbReference>
<dbReference type="Pfam" id="PF17982">
    <property type="entry name" value="C5HCH"/>
    <property type="match status" value="1"/>
</dbReference>
<dbReference type="Pfam" id="PF00628">
    <property type="entry name" value="PHD"/>
    <property type="match status" value="1"/>
</dbReference>
<dbReference type="Pfam" id="PF23011">
    <property type="entry name" value="PHD-1st_NSD"/>
    <property type="match status" value="1"/>
</dbReference>
<dbReference type="Pfam" id="PF22908">
    <property type="entry name" value="PHD_NSD"/>
    <property type="match status" value="1"/>
</dbReference>
<dbReference type="Pfam" id="PF23004">
    <property type="entry name" value="PHDvar_NSD"/>
    <property type="match status" value="1"/>
</dbReference>
<dbReference type="Pfam" id="PF00855">
    <property type="entry name" value="PWWP"/>
    <property type="match status" value="1"/>
</dbReference>
<dbReference type="Pfam" id="PF00856">
    <property type="entry name" value="SET"/>
    <property type="match status" value="1"/>
</dbReference>
<dbReference type="SMART" id="SM00570">
    <property type="entry name" value="AWS"/>
    <property type="match status" value="1"/>
</dbReference>
<dbReference type="SMART" id="SM00249">
    <property type="entry name" value="PHD"/>
    <property type="match status" value="5"/>
</dbReference>
<dbReference type="SMART" id="SM00508">
    <property type="entry name" value="PostSET"/>
    <property type="match status" value="1"/>
</dbReference>
<dbReference type="SMART" id="SM00293">
    <property type="entry name" value="PWWP"/>
    <property type="match status" value="1"/>
</dbReference>
<dbReference type="SMART" id="SM00317">
    <property type="entry name" value="SET"/>
    <property type="match status" value="1"/>
</dbReference>
<dbReference type="SUPFAM" id="SSF57903">
    <property type="entry name" value="FYVE/PHD zinc finger"/>
    <property type="match status" value="3"/>
</dbReference>
<dbReference type="SUPFAM" id="SSF82199">
    <property type="entry name" value="SET domain"/>
    <property type="match status" value="1"/>
</dbReference>
<dbReference type="SUPFAM" id="SSF63748">
    <property type="entry name" value="Tudor/PWWP/MBT"/>
    <property type="match status" value="1"/>
</dbReference>
<dbReference type="PROSITE" id="PS51215">
    <property type="entry name" value="AWS"/>
    <property type="match status" value="1"/>
</dbReference>
<dbReference type="PROSITE" id="PS50868">
    <property type="entry name" value="POST_SET"/>
    <property type="match status" value="1"/>
</dbReference>
<dbReference type="PROSITE" id="PS50812">
    <property type="entry name" value="PWWP"/>
    <property type="match status" value="1"/>
</dbReference>
<dbReference type="PROSITE" id="PS50280">
    <property type="entry name" value="SET"/>
    <property type="match status" value="1"/>
</dbReference>
<dbReference type="PROSITE" id="PS01359">
    <property type="entry name" value="ZF_PHD_1"/>
    <property type="match status" value="2"/>
</dbReference>
<dbReference type="PROSITE" id="PS50016">
    <property type="entry name" value="ZF_PHD_2"/>
    <property type="match status" value="2"/>
</dbReference>
<proteinExistence type="evidence at protein level"/>
<comment type="function">
    <text evidence="9 11">Histone methyltransferase that dimethylates Lys-36 of histone H3 (H3K36me2). Transcriptional intermediary factor capable of negatively influencing transcription. May also positively influence transcription. Essential for early post-implantation development.</text>
</comment>
<comment type="catalytic activity">
    <reaction evidence="9">
        <text>L-lysyl(36)-[histone H3] + 2 S-adenosyl-L-methionine = N(6),N(6)-dimethyl-L-lysyl(36)-[histone H3] + 2 S-adenosyl-L-homocysteine + 2 H(+)</text>
        <dbReference type="Rhea" id="RHEA:60308"/>
        <dbReference type="Rhea" id="RHEA-COMP:9785"/>
        <dbReference type="Rhea" id="RHEA-COMP:9787"/>
        <dbReference type="ChEBI" id="CHEBI:15378"/>
        <dbReference type="ChEBI" id="CHEBI:29969"/>
        <dbReference type="ChEBI" id="CHEBI:57856"/>
        <dbReference type="ChEBI" id="CHEBI:59789"/>
        <dbReference type="ChEBI" id="CHEBI:61976"/>
        <dbReference type="EC" id="2.1.1.357"/>
    </reaction>
</comment>
<comment type="subunit">
    <text evidence="1 10 11">Interacts with AR DNA- and ligand-binding domains (By similarity). Interacts with the ligand-binding domains of RARA and THRA in the absence of ligand; in the presence of ligand the interaction is severely disrupted but some binding still occurs. Interacts with the ligand-binding domains of RXRA and ESRRA only in the presence of ligand. Interacts with ZNF496.</text>
</comment>
<comment type="subcellular location">
    <subcellularLocation>
        <location evidence="11">Nucleus</location>
    </subcellularLocation>
    <subcellularLocation>
        <location evidence="13">Chromosome</location>
    </subcellularLocation>
</comment>
<comment type="tissue specificity">
    <text evidence="9">Expressed in the embryo and the outer region of the uterine decidua at early post-implantation 5.5 dpc stage. Uniformly expressed in embryonic and extraembryonic tissues during gastrulation stage 7.5 dpc. Expressed differentially after stage 14.5 dpc with highest expression in proliferating cells. Enriched in the telencephalic region of the brain, spinal cord, intestinal crypt, tooth buds, thymus and salivary glands at stage 16.5 dpc. Also expressed in the ossification region of developing bones and in the periosteum.</text>
</comment>
<comment type="domain">
    <text>Contains 2 adjacent but distinct nuclear receptor interaction domains (NID+L and NID-L) to which nuclear receptors bind differentially in the presence and absence of ligand respectively.</text>
</comment>
<comment type="similarity">
    <text evidence="6">Belongs to the class V-like SAM-binding methyltransferase superfamily.</text>
</comment>